<protein>
    <recommendedName>
        <fullName>Transcriptional regulator MraZ</fullName>
    </recommendedName>
</protein>
<name>MRAZ_YERPB</name>
<dbReference type="EMBL" id="CP001048">
    <property type="protein sequence ID" value="ACC87690.1"/>
    <property type="molecule type" value="Genomic_DNA"/>
</dbReference>
<dbReference type="RefSeq" id="WP_011191730.1">
    <property type="nucleotide sequence ID" value="NZ_CP009780.1"/>
</dbReference>
<dbReference type="SMR" id="B2K4D7"/>
<dbReference type="GeneID" id="49787316"/>
<dbReference type="KEGG" id="ypb:YPTS_0706"/>
<dbReference type="PATRIC" id="fig|502801.10.peg.37"/>
<dbReference type="GO" id="GO:0005737">
    <property type="term" value="C:cytoplasm"/>
    <property type="evidence" value="ECO:0007669"/>
    <property type="project" value="UniProtKB-UniRule"/>
</dbReference>
<dbReference type="GO" id="GO:0009295">
    <property type="term" value="C:nucleoid"/>
    <property type="evidence" value="ECO:0007669"/>
    <property type="project" value="UniProtKB-SubCell"/>
</dbReference>
<dbReference type="GO" id="GO:0003700">
    <property type="term" value="F:DNA-binding transcription factor activity"/>
    <property type="evidence" value="ECO:0007669"/>
    <property type="project" value="UniProtKB-UniRule"/>
</dbReference>
<dbReference type="GO" id="GO:0000976">
    <property type="term" value="F:transcription cis-regulatory region binding"/>
    <property type="evidence" value="ECO:0007669"/>
    <property type="project" value="TreeGrafter"/>
</dbReference>
<dbReference type="GO" id="GO:2000143">
    <property type="term" value="P:negative regulation of DNA-templated transcription initiation"/>
    <property type="evidence" value="ECO:0007669"/>
    <property type="project" value="TreeGrafter"/>
</dbReference>
<dbReference type="CDD" id="cd16321">
    <property type="entry name" value="MraZ_C"/>
    <property type="match status" value="1"/>
</dbReference>
<dbReference type="CDD" id="cd16320">
    <property type="entry name" value="MraZ_N"/>
    <property type="match status" value="1"/>
</dbReference>
<dbReference type="FunFam" id="3.40.1550.20:FF:000001">
    <property type="entry name" value="Transcriptional regulator MraZ"/>
    <property type="match status" value="1"/>
</dbReference>
<dbReference type="Gene3D" id="3.40.1550.20">
    <property type="entry name" value="Transcriptional regulator MraZ domain"/>
    <property type="match status" value="1"/>
</dbReference>
<dbReference type="HAMAP" id="MF_01008">
    <property type="entry name" value="MraZ"/>
    <property type="match status" value="1"/>
</dbReference>
<dbReference type="InterPro" id="IPR003444">
    <property type="entry name" value="MraZ"/>
</dbReference>
<dbReference type="InterPro" id="IPR035644">
    <property type="entry name" value="MraZ_C"/>
</dbReference>
<dbReference type="InterPro" id="IPR020603">
    <property type="entry name" value="MraZ_dom"/>
</dbReference>
<dbReference type="InterPro" id="IPR035642">
    <property type="entry name" value="MraZ_N"/>
</dbReference>
<dbReference type="InterPro" id="IPR038619">
    <property type="entry name" value="MraZ_sf"/>
</dbReference>
<dbReference type="InterPro" id="IPR007159">
    <property type="entry name" value="SpoVT-AbrB_dom"/>
</dbReference>
<dbReference type="InterPro" id="IPR037914">
    <property type="entry name" value="SpoVT-AbrB_sf"/>
</dbReference>
<dbReference type="NCBIfam" id="TIGR00242">
    <property type="entry name" value="division/cell wall cluster transcriptional repressor MraZ"/>
    <property type="match status" value="1"/>
</dbReference>
<dbReference type="PANTHER" id="PTHR34701">
    <property type="entry name" value="TRANSCRIPTIONAL REGULATOR MRAZ"/>
    <property type="match status" value="1"/>
</dbReference>
<dbReference type="PANTHER" id="PTHR34701:SF1">
    <property type="entry name" value="TRANSCRIPTIONAL REGULATOR MRAZ"/>
    <property type="match status" value="1"/>
</dbReference>
<dbReference type="Pfam" id="PF02381">
    <property type="entry name" value="MraZ"/>
    <property type="match status" value="2"/>
</dbReference>
<dbReference type="SUPFAM" id="SSF89447">
    <property type="entry name" value="AbrB/MazE/MraZ-like"/>
    <property type="match status" value="1"/>
</dbReference>
<dbReference type="PROSITE" id="PS51740">
    <property type="entry name" value="SPOVT_ABRB"/>
    <property type="match status" value="2"/>
</dbReference>
<gene>
    <name evidence="1" type="primary">mraZ</name>
    <name type="ordered locus">YPTS_0706</name>
</gene>
<organism>
    <name type="scientific">Yersinia pseudotuberculosis serotype IB (strain PB1/+)</name>
    <dbReference type="NCBI Taxonomy" id="502801"/>
    <lineage>
        <taxon>Bacteria</taxon>
        <taxon>Pseudomonadati</taxon>
        <taxon>Pseudomonadota</taxon>
        <taxon>Gammaproteobacteria</taxon>
        <taxon>Enterobacterales</taxon>
        <taxon>Yersiniaceae</taxon>
        <taxon>Yersinia</taxon>
    </lineage>
</organism>
<sequence>MFRGATMVNLDSKGRLAVPTRYRESLNEESQGQMVCTIDLHQPCLLLYPLPEWEIIEQKLSRLSSMNPAERRVQRLLLGHASECQMDGAGRLLIAGTLRQHAGLNKEVMLVGQFNKFELWDEQTWYQQVKDDIDAEQSTQEPLSERLQDLSL</sequence>
<reference key="1">
    <citation type="submission" date="2008-04" db="EMBL/GenBank/DDBJ databases">
        <title>Complete sequence of Yersinia pseudotuberculosis PB1/+.</title>
        <authorList>
            <person name="Copeland A."/>
            <person name="Lucas S."/>
            <person name="Lapidus A."/>
            <person name="Glavina del Rio T."/>
            <person name="Dalin E."/>
            <person name="Tice H."/>
            <person name="Bruce D."/>
            <person name="Goodwin L."/>
            <person name="Pitluck S."/>
            <person name="Munk A.C."/>
            <person name="Brettin T."/>
            <person name="Detter J.C."/>
            <person name="Han C."/>
            <person name="Tapia R."/>
            <person name="Schmutz J."/>
            <person name="Larimer F."/>
            <person name="Land M."/>
            <person name="Hauser L."/>
            <person name="Challacombe J.F."/>
            <person name="Green L."/>
            <person name="Lindler L.E."/>
            <person name="Nikolich M.P."/>
            <person name="Richardson P."/>
        </authorList>
    </citation>
    <scope>NUCLEOTIDE SEQUENCE [LARGE SCALE GENOMIC DNA]</scope>
    <source>
        <strain>PB1/+</strain>
    </source>
</reference>
<feature type="chain" id="PRO_1000191345" description="Transcriptional regulator MraZ">
    <location>
        <begin position="1"/>
        <end position="152"/>
    </location>
</feature>
<feature type="domain" description="SpoVT-AbrB 1" evidence="2">
    <location>
        <begin position="5"/>
        <end position="52"/>
    </location>
</feature>
<feature type="domain" description="SpoVT-AbrB 2" evidence="2">
    <location>
        <begin position="81"/>
        <end position="124"/>
    </location>
</feature>
<keyword id="KW-0963">Cytoplasm</keyword>
<keyword id="KW-0238">DNA-binding</keyword>
<keyword id="KW-0677">Repeat</keyword>
<keyword id="KW-0678">Repressor</keyword>
<keyword id="KW-0804">Transcription</keyword>
<keyword id="KW-0805">Transcription regulation</keyword>
<accession>B2K4D7</accession>
<evidence type="ECO:0000255" key="1">
    <source>
        <dbReference type="HAMAP-Rule" id="MF_01008"/>
    </source>
</evidence>
<evidence type="ECO:0000255" key="2">
    <source>
        <dbReference type="PROSITE-ProRule" id="PRU01076"/>
    </source>
</evidence>
<proteinExistence type="inferred from homology"/>
<comment type="function">
    <text evidence="1">Negatively regulates its own expression and that of the subsequent genes in the proximal part of the division and cell wall (dcw) gene cluster. Acts by binding directly to DNA. May also regulate the expression of genes outside the dcw cluster.</text>
</comment>
<comment type="subunit">
    <text evidence="1">Forms oligomers.</text>
</comment>
<comment type="subcellular location">
    <subcellularLocation>
        <location evidence="1">Cytoplasm</location>
        <location evidence="1">Nucleoid</location>
    </subcellularLocation>
</comment>
<comment type="similarity">
    <text evidence="1">Belongs to the MraZ family.</text>
</comment>